<sequence>MPPSPLDDRVVVALSRPVRPQDLNLCLDSSYLGSASPGSGSHAPVLATAVVTLKAANLTYMPSSSGSARSLNCGCSSTSCCTVATYDKDHQAQTQAIAAGTATTAIGTSTTCPANQMVNNNENTGSVLSPSGGVGSPVSGTPKQLASIKIIYPNDLAKKMTKCSKSHLPSQGPVIIDCRPFMEYNKSHIQGAVHINCADKISRRRLQQGKITVLDLISCREGKDSFKRIFSKEIIVYDENTNEPSRVTPSQPLHIVLESLKREGKEPLVLKGGLSSFKQNHGNLCDNSLQLQECREVGGGASAASSMLPQSVPTTPDIENAELTPILPFLFLGNEQDAQDLDTMQRLNIGYVINVTTHLPLYHYEKGLFNYKRLPATDSNKQNLRQYFEEAFEFIEEAHQCGKGLLIHCQAGVSRSATIVIAYLMKHTRMTMTDAYKFVKGKRPIISPNLNFMGQLLEFEEDLNNGVTPRILTPKLMGMETVV</sequence>
<reference key="1">
    <citation type="journal article" date="2000" name="Cytogenet. Cell Genet.">
        <title>Expression and comparative chromosomal mapping of MKP-5 genes DUSP10/Dusp10.</title>
        <authorList>
            <person name="Masuda K."/>
            <person name="Shima H."/>
            <person name="Kikuchi K."/>
            <person name="Watanabe Y."/>
            <person name="Matsuda Y."/>
        </authorList>
    </citation>
    <scope>NUCLEOTIDE SEQUENCE [MRNA]</scope>
    <source>
        <strain>C57BL/6J</strain>
    </source>
</reference>
<reference key="2">
    <citation type="journal article" date="2005" name="Science">
        <title>The transcriptional landscape of the mammalian genome.</title>
        <authorList>
            <person name="Carninci P."/>
            <person name="Kasukawa T."/>
            <person name="Katayama S."/>
            <person name="Gough J."/>
            <person name="Frith M.C."/>
            <person name="Maeda N."/>
            <person name="Oyama R."/>
            <person name="Ravasi T."/>
            <person name="Lenhard B."/>
            <person name="Wells C."/>
            <person name="Kodzius R."/>
            <person name="Shimokawa K."/>
            <person name="Bajic V.B."/>
            <person name="Brenner S.E."/>
            <person name="Batalov S."/>
            <person name="Forrest A.R."/>
            <person name="Zavolan M."/>
            <person name="Davis M.J."/>
            <person name="Wilming L.G."/>
            <person name="Aidinis V."/>
            <person name="Allen J.E."/>
            <person name="Ambesi-Impiombato A."/>
            <person name="Apweiler R."/>
            <person name="Aturaliya R.N."/>
            <person name="Bailey T.L."/>
            <person name="Bansal M."/>
            <person name="Baxter L."/>
            <person name="Beisel K.W."/>
            <person name="Bersano T."/>
            <person name="Bono H."/>
            <person name="Chalk A.M."/>
            <person name="Chiu K.P."/>
            <person name="Choudhary V."/>
            <person name="Christoffels A."/>
            <person name="Clutterbuck D.R."/>
            <person name="Crowe M.L."/>
            <person name="Dalla E."/>
            <person name="Dalrymple B.P."/>
            <person name="de Bono B."/>
            <person name="Della Gatta G."/>
            <person name="di Bernardo D."/>
            <person name="Down T."/>
            <person name="Engstrom P."/>
            <person name="Fagiolini M."/>
            <person name="Faulkner G."/>
            <person name="Fletcher C.F."/>
            <person name="Fukushima T."/>
            <person name="Furuno M."/>
            <person name="Futaki S."/>
            <person name="Gariboldi M."/>
            <person name="Georgii-Hemming P."/>
            <person name="Gingeras T.R."/>
            <person name="Gojobori T."/>
            <person name="Green R.E."/>
            <person name="Gustincich S."/>
            <person name="Harbers M."/>
            <person name="Hayashi Y."/>
            <person name="Hensch T.K."/>
            <person name="Hirokawa N."/>
            <person name="Hill D."/>
            <person name="Huminiecki L."/>
            <person name="Iacono M."/>
            <person name="Ikeo K."/>
            <person name="Iwama A."/>
            <person name="Ishikawa T."/>
            <person name="Jakt M."/>
            <person name="Kanapin A."/>
            <person name="Katoh M."/>
            <person name="Kawasawa Y."/>
            <person name="Kelso J."/>
            <person name="Kitamura H."/>
            <person name="Kitano H."/>
            <person name="Kollias G."/>
            <person name="Krishnan S.P."/>
            <person name="Kruger A."/>
            <person name="Kummerfeld S.K."/>
            <person name="Kurochkin I.V."/>
            <person name="Lareau L.F."/>
            <person name="Lazarevic D."/>
            <person name="Lipovich L."/>
            <person name="Liu J."/>
            <person name="Liuni S."/>
            <person name="McWilliam S."/>
            <person name="Madan Babu M."/>
            <person name="Madera M."/>
            <person name="Marchionni L."/>
            <person name="Matsuda H."/>
            <person name="Matsuzawa S."/>
            <person name="Miki H."/>
            <person name="Mignone F."/>
            <person name="Miyake S."/>
            <person name="Morris K."/>
            <person name="Mottagui-Tabar S."/>
            <person name="Mulder N."/>
            <person name="Nakano N."/>
            <person name="Nakauchi H."/>
            <person name="Ng P."/>
            <person name="Nilsson R."/>
            <person name="Nishiguchi S."/>
            <person name="Nishikawa S."/>
            <person name="Nori F."/>
            <person name="Ohara O."/>
            <person name="Okazaki Y."/>
            <person name="Orlando V."/>
            <person name="Pang K.C."/>
            <person name="Pavan W.J."/>
            <person name="Pavesi G."/>
            <person name="Pesole G."/>
            <person name="Petrovsky N."/>
            <person name="Piazza S."/>
            <person name="Reed J."/>
            <person name="Reid J.F."/>
            <person name="Ring B.Z."/>
            <person name="Ringwald M."/>
            <person name="Rost B."/>
            <person name="Ruan Y."/>
            <person name="Salzberg S.L."/>
            <person name="Sandelin A."/>
            <person name="Schneider C."/>
            <person name="Schoenbach C."/>
            <person name="Sekiguchi K."/>
            <person name="Semple C.A."/>
            <person name="Seno S."/>
            <person name="Sessa L."/>
            <person name="Sheng Y."/>
            <person name="Shibata Y."/>
            <person name="Shimada H."/>
            <person name="Shimada K."/>
            <person name="Silva D."/>
            <person name="Sinclair B."/>
            <person name="Sperling S."/>
            <person name="Stupka E."/>
            <person name="Sugiura K."/>
            <person name="Sultana R."/>
            <person name="Takenaka Y."/>
            <person name="Taki K."/>
            <person name="Tammoja K."/>
            <person name="Tan S.L."/>
            <person name="Tang S."/>
            <person name="Taylor M.S."/>
            <person name="Tegner J."/>
            <person name="Teichmann S.A."/>
            <person name="Ueda H.R."/>
            <person name="van Nimwegen E."/>
            <person name="Verardo R."/>
            <person name="Wei C.L."/>
            <person name="Yagi K."/>
            <person name="Yamanishi H."/>
            <person name="Zabarovsky E."/>
            <person name="Zhu S."/>
            <person name="Zimmer A."/>
            <person name="Hide W."/>
            <person name="Bult C."/>
            <person name="Grimmond S.M."/>
            <person name="Teasdale R.D."/>
            <person name="Liu E.T."/>
            <person name="Brusic V."/>
            <person name="Quackenbush J."/>
            <person name="Wahlestedt C."/>
            <person name="Mattick J.S."/>
            <person name="Hume D.A."/>
            <person name="Kai C."/>
            <person name="Sasaki D."/>
            <person name="Tomaru Y."/>
            <person name="Fukuda S."/>
            <person name="Kanamori-Katayama M."/>
            <person name="Suzuki M."/>
            <person name="Aoki J."/>
            <person name="Arakawa T."/>
            <person name="Iida J."/>
            <person name="Imamura K."/>
            <person name="Itoh M."/>
            <person name="Kato T."/>
            <person name="Kawaji H."/>
            <person name="Kawagashira N."/>
            <person name="Kawashima T."/>
            <person name="Kojima M."/>
            <person name="Kondo S."/>
            <person name="Konno H."/>
            <person name="Nakano K."/>
            <person name="Ninomiya N."/>
            <person name="Nishio T."/>
            <person name="Okada M."/>
            <person name="Plessy C."/>
            <person name="Shibata K."/>
            <person name="Shiraki T."/>
            <person name="Suzuki S."/>
            <person name="Tagami M."/>
            <person name="Waki K."/>
            <person name="Watahiki A."/>
            <person name="Okamura-Oho Y."/>
            <person name="Suzuki H."/>
            <person name="Kawai J."/>
            <person name="Hayashizaki Y."/>
        </authorList>
    </citation>
    <scope>NUCLEOTIDE SEQUENCE [LARGE SCALE MRNA]</scope>
    <source>
        <strain>C57BL/6J</strain>
        <strain>NOD</strain>
        <tissue>Embryo</tissue>
        <tissue>Kidney</tissue>
        <tissue>Pancreas</tissue>
        <tissue>Thymus</tissue>
        <tissue>Urinary bladder</tissue>
    </source>
</reference>
<reference key="3">
    <citation type="journal article" date="2004" name="Genome Res.">
        <title>The status, quality, and expansion of the NIH full-length cDNA project: the Mammalian Gene Collection (MGC).</title>
        <authorList>
            <consortium name="The MGC Project Team"/>
        </authorList>
    </citation>
    <scope>NUCLEOTIDE SEQUENCE [LARGE SCALE MRNA]</scope>
    <source>
        <strain>Czech II</strain>
        <tissue>Mammary tumor</tissue>
    </source>
</reference>
<comment type="function">
    <text evidence="2">Protein phosphatase involved in the inactivation of MAP kinases. Has a specificity for the MAPK11/MAPK12/MAPK13/MAPK14 subfamily. It preferably dephosphorylates p38.</text>
</comment>
<comment type="catalytic activity">
    <reaction evidence="2 5">
        <text>O-phospho-L-tyrosyl-[protein] + H2O = L-tyrosyl-[protein] + phosphate</text>
        <dbReference type="Rhea" id="RHEA:10684"/>
        <dbReference type="Rhea" id="RHEA-COMP:10136"/>
        <dbReference type="Rhea" id="RHEA-COMP:20101"/>
        <dbReference type="ChEBI" id="CHEBI:15377"/>
        <dbReference type="ChEBI" id="CHEBI:43474"/>
        <dbReference type="ChEBI" id="CHEBI:46858"/>
        <dbReference type="ChEBI" id="CHEBI:61978"/>
        <dbReference type="EC" id="3.1.3.48"/>
    </reaction>
</comment>
<comment type="catalytic activity">
    <reaction evidence="2">
        <text>O-phospho-L-seryl-[protein] + H2O = L-seryl-[protein] + phosphate</text>
        <dbReference type="Rhea" id="RHEA:20629"/>
        <dbReference type="Rhea" id="RHEA-COMP:9863"/>
        <dbReference type="Rhea" id="RHEA-COMP:11604"/>
        <dbReference type="ChEBI" id="CHEBI:15377"/>
        <dbReference type="ChEBI" id="CHEBI:29999"/>
        <dbReference type="ChEBI" id="CHEBI:43474"/>
        <dbReference type="ChEBI" id="CHEBI:83421"/>
        <dbReference type="EC" id="3.1.3.16"/>
    </reaction>
</comment>
<comment type="catalytic activity">
    <reaction evidence="2">
        <text>O-phospho-L-threonyl-[protein] + H2O = L-threonyl-[protein] + phosphate</text>
        <dbReference type="Rhea" id="RHEA:47004"/>
        <dbReference type="Rhea" id="RHEA-COMP:11060"/>
        <dbReference type="Rhea" id="RHEA-COMP:11605"/>
        <dbReference type="ChEBI" id="CHEBI:15377"/>
        <dbReference type="ChEBI" id="CHEBI:30013"/>
        <dbReference type="ChEBI" id="CHEBI:43474"/>
        <dbReference type="ChEBI" id="CHEBI:61977"/>
        <dbReference type="EC" id="3.1.3.16"/>
    </reaction>
</comment>
<comment type="subunit">
    <text evidence="2">Monomer. Interacts with MAPK14.</text>
</comment>
<comment type="subcellular location">
    <subcellularLocation>
        <location evidence="2">Cytoplasm</location>
    </subcellularLocation>
    <subcellularLocation>
        <location evidence="2">Nucleus</location>
    </subcellularLocation>
</comment>
<comment type="similarity">
    <text evidence="6">Belongs to the protein-tyrosine phosphatase family. Non-receptor class dual specificity subfamily.</text>
</comment>
<proteinExistence type="evidence at transcript level"/>
<organism>
    <name type="scientific">Mus musculus</name>
    <name type="common">Mouse</name>
    <dbReference type="NCBI Taxonomy" id="10090"/>
    <lineage>
        <taxon>Eukaryota</taxon>
        <taxon>Metazoa</taxon>
        <taxon>Chordata</taxon>
        <taxon>Craniata</taxon>
        <taxon>Vertebrata</taxon>
        <taxon>Euteleostomi</taxon>
        <taxon>Mammalia</taxon>
        <taxon>Eutheria</taxon>
        <taxon>Euarchontoglires</taxon>
        <taxon>Glires</taxon>
        <taxon>Rodentia</taxon>
        <taxon>Myomorpha</taxon>
        <taxon>Muroidea</taxon>
        <taxon>Muridae</taxon>
        <taxon>Murinae</taxon>
        <taxon>Mus</taxon>
        <taxon>Mus</taxon>
    </lineage>
</organism>
<keyword id="KW-0963">Cytoplasm</keyword>
<keyword id="KW-0378">Hydrolase</keyword>
<keyword id="KW-0539">Nucleus</keyword>
<keyword id="KW-0904">Protein phosphatase</keyword>
<keyword id="KW-1185">Reference proteome</keyword>
<accession>Q9ESS0</accession>
<accession>Q8R3L3</accession>
<accession>Q9CZY9</accession>
<protein>
    <recommendedName>
        <fullName>Dual specificity protein phosphatase 10</fullName>
        <ecNumber evidence="2">3.1.3.16</ecNumber>
        <ecNumber evidence="2">3.1.3.48</ecNumber>
    </recommendedName>
    <alternativeName>
        <fullName>Mitogen-activated protein kinase phosphatase 5</fullName>
        <shortName>MAP kinase phosphatase 5</shortName>
        <shortName>MKP-5</shortName>
    </alternativeName>
</protein>
<gene>
    <name type="primary">Dusp10</name>
    <name type="synonym">Mkp5</name>
</gene>
<dbReference type="EC" id="3.1.3.16" evidence="2"/>
<dbReference type="EC" id="3.1.3.48" evidence="2"/>
<dbReference type="EMBL" id="AB037908">
    <property type="protein sequence ID" value="BAB17680.1"/>
    <property type="molecule type" value="mRNA"/>
</dbReference>
<dbReference type="EMBL" id="AK011995">
    <property type="protein sequence ID" value="BAB27966.1"/>
    <property type="molecule type" value="mRNA"/>
</dbReference>
<dbReference type="EMBL" id="AK035293">
    <property type="protein sequence ID" value="BAC29019.1"/>
    <property type="molecule type" value="mRNA"/>
</dbReference>
<dbReference type="EMBL" id="AK050528">
    <property type="protein sequence ID" value="BAC34308.1"/>
    <property type="molecule type" value="mRNA"/>
</dbReference>
<dbReference type="EMBL" id="AK088024">
    <property type="protein sequence ID" value="BAC40102.1"/>
    <property type="molecule type" value="mRNA"/>
</dbReference>
<dbReference type="EMBL" id="AK088186">
    <property type="protein sequence ID" value="BAC40196.1"/>
    <property type="molecule type" value="mRNA"/>
</dbReference>
<dbReference type="EMBL" id="AK088357">
    <property type="protein sequence ID" value="BAC40300.1"/>
    <property type="molecule type" value="mRNA"/>
</dbReference>
<dbReference type="EMBL" id="AK142568">
    <property type="protein sequence ID" value="BAE25109.1"/>
    <property type="molecule type" value="mRNA"/>
</dbReference>
<dbReference type="EMBL" id="BC025066">
    <property type="protein sequence ID" value="AAH25066.1"/>
    <property type="molecule type" value="mRNA"/>
</dbReference>
<dbReference type="CCDS" id="CCDS15591.1"/>
<dbReference type="RefSeq" id="NP_071302.2">
    <property type="nucleotide sequence ID" value="NM_022019.5"/>
</dbReference>
<dbReference type="RefSeq" id="XP_006497251.1">
    <property type="nucleotide sequence ID" value="XM_006497188.3"/>
</dbReference>
<dbReference type="RefSeq" id="XP_006497252.1">
    <property type="nucleotide sequence ID" value="XM_006497189.3"/>
</dbReference>
<dbReference type="SMR" id="Q9ESS0"/>
<dbReference type="BioGRID" id="211005">
    <property type="interactions" value="1"/>
</dbReference>
<dbReference type="FunCoup" id="Q9ESS0">
    <property type="interactions" value="2264"/>
</dbReference>
<dbReference type="IntAct" id="Q9ESS0">
    <property type="interactions" value="1"/>
</dbReference>
<dbReference type="STRING" id="10090.ENSMUSP00000045838"/>
<dbReference type="GlyGen" id="Q9ESS0">
    <property type="glycosylation" value="1 site"/>
</dbReference>
<dbReference type="iPTMnet" id="Q9ESS0"/>
<dbReference type="PhosphoSitePlus" id="Q9ESS0"/>
<dbReference type="SwissPalm" id="Q9ESS0"/>
<dbReference type="PaxDb" id="10090-ENSMUSP00000045838"/>
<dbReference type="PeptideAtlas" id="Q9ESS0"/>
<dbReference type="ProteomicsDB" id="279488"/>
<dbReference type="Antibodypedia" id="20739">
    <property type="antibodies" value="365 antibodies from 35 providers"/>
</dbReference>
<dbReference type="DNASU" id="63953"/>
<dbReference type="Ensembl" id="ENSMUST00000048655.8">
    <property type="protein sequence ID" value="ENSMUSP00000045838.8"/>
    <property type="gene ID" value="ENSMUSG00000039384.9"/>
</dbReference>
<dbReference type="GeneID" id="63953"/>
<dbReference type="KEGG" id="mmu:63953"/>
<dbReference type="UCSC" id="uc007dym.1">
    <property type="organism name" value="mouse"/>
</dbReference>
<dbReference type="AGR" id="MGI:1927070"/>
<dbReference type="CTD" id="11221"/>
<dbReference type="MGI" id="MGI:1927070">
    <property type="gene designation" value="Dusp10"/>
</dbReference>
<dbReference type="VEuPathDB" id="HostDB:ENSMUSG00000039384"/>
<dbReference type="eggNOG" id="KOG1716">
    <property type="taxonomic scope" value="Eukaryota"/>
</dbReference>
<dbReference type="GeneTree" id="ENSGT00940000157671"/>
<dbReference type="HOGENOM" id="CLU_027074_0_1_1"/>
<dbReference type="InParanoid" id="Q9ESS0"/>
<dbReference type="OMA" id="KKMTKCT"/>
<dbReference type="OrthoDB" id="165342at2759"/>
<dbReference type="PhylomeDB" id="Q9ESS0"/>
<dbReference type="TreeFam" id="TF105122"/>
<dbReference type="Reactome" id="R-MMU-112409">
    <property type="pathway name" value="RAF-independent MAPK1/3 activation"/>
</dbReference>
<dbReference type="Reactome" id="R-MMU-5675221">
    <property type="pathway name" value="Negative regulation of MAPK pathway"/>
</dbReference>
<dbReference type="BioGRID-ORCS" id="63953">
    <property type="hits" value="3 hits in 77 CRISPR screens"/>
</dbReference>
<dbReference type="PRO" id="PR:Q9ESS0"/>
<dbReference type="Proteomes" id="UP000000589">
    <property type="component" value="Chromosome 1"/>
</dbReference>
<dbReference type="RNAct" id="Q9ESS0">
    <property type="molecule type" value="protein"/>
</dbReference>
<dbReference type="Bgee" id="ENSMUSG00000039384">
    <property type="expression patterns" value="Expressed in temporalis muscle and 200 other cell types or tissues"/>
</dbReference>
<dbReference type="ExpressionAtlas" id="Q9ESS0">
    <property type="expression patterns" value="baseline and differential"/>
</dbReference>
<dbReference type="GO" id="GO:0005829">
    <property type="term" value="C:cytosol"/>
    <property type="evidence" value="ECO:0007669"/>
    <property type="project" value="Ensembl"/>
</dbReference>
<dbReference type="GO" id="GO:0005654">
    <property type="term" value="C:nucleoplasm"/>
    <property type="evidence" value="ECO:0007669"/>
    <property type="project" value="Ensembl"/>
</dbReference>
<dbReference type="GO" id="GO:0008432">
    <property type="term" value="F:JUN kinase binding"/>
    <property type="evidence" value="ECO:0007669"/>
    <property type="project" value="Ensembl"/>
</dbReference>
<dbReference type="GO" id="GO:0033549">
    <property type="term" value="F:MAP kinase phosphatase activity"/>
    <property type="evidence" value="ECO:0000314"/>
    <property type="project" value="BHF-UCL"/>
</dbReference>
<dbReference type="GO" id="GO:0017017">
    <property type="term" value="F:MAP kinase tyrosine/serine/threonine phosphatase activity"/>
    <property type="evidence" value="ECO:0007669"/>
    <property type="project" value="InterPro"/>
</dbReference>
<dbReference type="GO" id="GO:0048273">
    <property type="term" value="F:mitogen-activated protein kinase p38 binding"/>
    <property type="evidence" value="ECO:0007669"/>
    <property type="project" value="Ensembl"/>
</dbReference>
<dbReference type="GO" id="GO:0004722">
    <property type="term" value="F:protein serine/threonine phosphatase activity"/>
    <property type="evidence" value="ECO:0007669"/>
    <property type="project" value="UniProtKB-EC"/>
</dbReference>
<dbReference type="GO" id="GO:0004725">
    <property type="term" value="F:protein tyrosine phosphatase activity"/>
    <property type="evidence" value="ECO:0007669"/>
    <property type="project" value="UniProtKB-EC"/>
</dbReference>
<dbReference type="GO" id="GO:0008330">
    <property type="term" value="F:protein tyrosine/threonine phosphatase activity"/>
    <property type="evidence" value="ECO:0007669"/>
    <property type="project" value="Ensembl"/>
</dbReference>
<dbReference type="GO" id="GO:0010633">
    <property type="term" value="P:negative regulation of epithelial cell migration"/>
    <property type="evidence" value="ECO:0000315"/>
    <property type="project" value="BHF-UCL"/>
</dbReference>
<dbReference type="GO" id="GO:0050680">
    <property type="term" value="P:negative regulation of epithelial cell proliferation"/>
    <property type="evidence" value="ECO:0000315"/>
    <property type="project" value="BHF-UCL"/>
</dbReference>
<dbReference type="GO" id="GO:1905042">
    <property type="term" value="P:negative regulation of epithelium regeneration"/>
    <property type="evidence" value="ECO:0000314"/>
    <property type="project" value="BHF-UCL"/>
</dbReference>
<dbReference type="GO" id="GO:0070373">
    <property type="term" value="P:negative regulation of ERK1 and ERK2 cascade"/>
    <property type="evidence" value="ECO:0000315"/>
    <property type="project" value="BHF-UCL"/>
</dbReference>
<dbReference type="GO" id="GO:0046329">
    <property type="term" value="P:negative regulation of JNK cascade"/>
    <property type="evidence" value="ECO:0000315"/>
    <property type="project" value="MGI"/>
</dbReference>
<dbReference type="GO" id="GO:0048715">
    <property type="term" value="P:negative regulation of oligodendrocyte differentiation"/>
    <property type="evidence" value="ECO:0007669"/>
    <property type="project" value="Ensembl"/>
</dbReference>
<dbReference type="GO" id="GO:1903753">
    <property type="term" value="P:negative regulation of p38MAPK cascade"/>
    <property type="evidence" value="ECO:0007669"/>
    <property type="project" value="Ensembl"/>
</dbReference>
<dbReference type="GO" id="GO:0060266">
    <property type="term" value="P:negative regulation of respiratory burst involved in inflammatory response"/>
    <property type="evidence" value="ECO:0000315"/>
    <property type="project" value="MGI"/>
</dbReference>
<dbReference type="GO" id="GO:0032873">
    <property type="term" value="P:negative regulation of stress-activated MAPK cascade"/>
    <property type="evidence" value="ECO:0000315"/>
    <property type="project" value="MGI"/>
</dbReference>
<dbReference type="GO" id="GO:0048709">
    <property type="term" value="P:oligodendrocyte differentiation"/>
    <property type="evidence" value="ECO:0000315"/>
    <property type="project" value="MGI"/>
</dbReference>
<dbReference type="GO" id="GO:0045591">
    <property type="term" value="P:positive regulation of regulatory T cell differentiation"/>
    <property type="evidence" value="ECO:0007669"/>
    <property type="project" value="Ensembl"/>
</dbReference>
<dbReference type="GO" id="GO:0002819">
    <property type="term" value="P:regulation of adaptive immune response"/>
    <property type="evidence" value="ECO:0000315"/>
    <property type="project" value="MGI"/>
</dbReference>
<dbReference type="GO" id="GO:0090335">
    <property type="term" value="P:regulation of brown fat cell differentiation"/>
    <property type="evidence" value="ECO:0000314"/>
    <property type="project" value="MGI"/>
</dbReference>
<dbReference type="GO" id="GO:0045088">
    <property type="term" value="P:regulation of innate immune response"/>
    <property type="evidence" value="ECO:0000315"/>
    <property type="project" value="MGI"/>
</dbReference>
<dbReference type="GO" id="GO:0032496">
    <property type="term" value="P:response to lipopolysaccharide"/>
    <property type="evidence" value="ECO:0000315"/>
    <property type="project" value="MGI"/>
</dbReference>
<dbReference type="GO" id="GO:0051403">
    <property type="term" value="P:stress-activated MAPK cascade"/>
    <property type="evidence" value="ECO:0000315"/>
    <property type="project" value="MGI"/>
</dbReference>
<dbReference type="CDD" id="cd14567">
    <property type="entry name" value="DSP_DUSP10"/>
    <property type="match status" value="1"/>
</dbReference>
<dbReference type="CDD" id="cd01446">
    <property type="entry name" value="DSP_MapKP"/>
    <property type="match status" value="1"/>
</dbReference>
<dbReference type="FunFam" id="3.90.190.10:FF:000028">
    <property type="entry name" value="Dual specificity phosphatase 10"/>
    <property type="match status" value="1"/>
</dbReference>
<dbReference type="FunFam" id="3.40.250.10:FF:000013">
    <property type="entry name" value="Dual specificity phosphatase 10 (Predicted)"/>
    <property type="match status" value="1"/>
</dbReference>
<dbReference type="Gene3D" id="3.90.190.10">
    <property type="entry name" value="Protein tyrosine phosphatase superfamily"/>
    <property type="match status" value="1"/>
</dbReference>
<dbReference type="Gene3D" id="3.40.250.10">
    <property type="entry name" value="Rhodanese-like domain"/>
    <property type="match status" value="1"/>
</dbReference>
<dbReference type="InterPro" id="IPR000340">
    <property type="entry name" value="Dual-sp_phosphatase_cat-dom"/>
</dbReference>
<dbReference type="InterPro" id="IPR008343">
    <property type="entry name" value="MKP"/>
</dbReference>
<dbReference type="InterPro" id="IPR029021">
    <property type="entry name" value="Prot-tyrosine_phosphatase-like"/>
</dbReference>
<dbReference type="InterPro" id="IPR001763">
    <property type="entry name" value="Rhodanese-like_dom"/>
</dbReference>
<dbReference type="InterPro" id="IPR036873">
    <property type="entry name" value="Rhodanese-like_dom_sf"/>
</dbReference>
<dbReference type="InterPro" id="IPR016130">
    <property type="entry name" value="Tyr_Pase_AS"/>
</dbReference>
<dbReference type="InterPro" id="IPR000387">
    <property type="entry name" value="Tyr_Pase_dom"/>
</dbReference>
<dbReference type="InterPro" id="IPR020422">
    <property type="entry name" value="TYR_PHOSPHATASE_DUAL_dom"/>
</dbReference>
<dbReference type="PANTHER" id="PTHR10159">
    <property type="entry name" value="DUAL SPECIFICITY PROTEIN PHOSPHATASE"/>
    <property type="match status" value="1"/>
</dbReference>
<dbReference type="PANTHER" id="PTHR10159:SF299">
    <property type="entry name" value="DUAL SPECIFICITY PROTEIN PHOSPHATASE 10"/>
    <property type="match status" value="1"/>
</dbReference>
<dbReference type="Pfam" id="PF00782">
    <property type="entry name" value="DSPc"/>
    <property type="match status" value="1"/>
</dbReference>
<dbReference type="Pfam" id="PF00581">
    <property type="entry name" value="Rhodanese"/>
    <property type="match status" value="1"/>
</dbReference>
<dbReference type="PRINTS" id="PR01908">
    <property type="entry name" value="ADSPHPHTASE"/>
</dbReference>
<dbReference type="PRINTS" id="PR01764">
    <property type="entry name" value="MAPKPHPHTASE"/>
</dbReference>
<dbReference type="SMART" id="SM00195">
    <property type="entry name" value="DSPc"/>
    <property type="match status" value="1"/>
</dbReference>
<dbReference type="SMART" id="SM00450">
    <property type="entry name" value="RHOD"/>
    <property type="match status" value="1"/>
</dbReference>
<dbReference type="SUPFAM" id="SSF52799">
    <property type="entry name" value="(Phosphotyrosine protein) phosphatases II"/>
    <property type="match status" value="1"/>
</dbReference>
<dbReference type="SUPFAM" id="SSF52821">
    <property type="entry name" value="Rhodanese/Cell cycle control phosphatase"/>
    <property type="match status" value="1"/>
</dbReference>
<dbReference type="PROSITE" id="PS50206">
    <property type="entry name" value="RHODANESE_3"/>
    <property type="match status" value="1"/>
</dbReference>
<dbReference type="PROSITE" id="PS00383">
    <property type="entry name" value="TYR_PHOSPHATASE_1"/>
    <property type="match status" value="1"/>
</dbReference>
<dbReference type="PROSITE" id="PS50056">
    <property type="entry name" value="TYR_PHOSPHATASE_2"/>
    <property type="match status" value="1"/>
</dbReference>
<dbReference type="PROSITE" id="PS50054">
    <property type="entry name" value="TYR_PHOSPHATASE_DUAL"/>
    <property type="match status" value="1"/>
</dbReference>
<feature type="chain" id="PRO_0000094814" description="Dual specificity protein phosphatase 10">
    <location>
        <begin position="1"/>
        <end position="483"/>
    </location>
</feature>
<feature type="domain" description="Rhodanese" evidence="4">
    <location>
        <begin position="169"/>
        <end position="286"/>
    </location>
</feature>
<feature type="domain" description="Tyrosine-protein phosphatase" evidence="3">
    <location>
        <begin position="322"/>
        <end position="465"/>
    </location>
</feature>
<feature type="region of interest" description="Interaction with MAP kinases" evidence="1">
    <location>
        <begin position="200"/>
        <end position="216"/>
    </location>
</feature>
<feature type="active site" description="Phosphocysteine intermediate" evidence="3">
    <location>
        <position position="409"/>
    </location>
</feature>
<feature type="sequence conflict" description="In Ref. 1; BAB17680." evidence="6" ref="1">
    <original>T</original>
    <variation>A</variation>
    <location>
        <position position="48"/>
    </location>
</feature>
<feature type="sequence conflict" description="In Ref. 2; BAB27966." evidence="6" ref="2">
    <original>P</original>
    <variation>S</variation>
    <location>
        <position position="113"/>
    </location>
</feature>
<feature type="sequence conflict" description="In Ref. 1; BAB17680." evidence="6" ref="1">
    <original>Q</original>
    <variation>R</variation>
    <location>
        <position position="386"/>
    </location>
</feature>
<name>DUS10_MOUSE</name>
<evidence type="ECO:0000250" key="1"/>
<evidence type="ECO:0000250" key="2">
    <source>
        <dbReference type="UniProtKB" id="Q9Y6W6"/>
    </source>
</evidence>
<evidence type="ECO:0000255" key="3">
    <source>
        <dbReference type="PROSITE-ProRule" id="PRU00160"/>
    </source>
</evidence>
<evidence type="ECO:0000255" key="4">
    <source>
        <dbReference type="PROSITE-ProRule" id="PRU00173"/>
    </source>
</evidence>
<evidence type="ECO:0000255" key="5">
    <source>
        <dbReference type="PROSITE-ProRule" id="PRU10044"/>
    </source>
</evidence>
<evidence type="ECO:0000305" key="6"/>